<evidence type="ECO:0000255" key="1">
    <source>
        <dbReference type="HAMAP-Rule" id="MF_00294"/>
    </source>
</evidence>
<comment type="similarity">
    <text evidence="1">Belongs to the bacterial ribosomal protein bL33 family.</text>
</comment>
<feature type="chain" id="PRO_0000356547" description="Large ribosomal subunit protein bL33B">
    <location>
        <begin position="1"/>
        <end position="54"/>
    </location>
</feature>
<accession>A1KKA3</accession>
<sequence length="54" mass="6589">MARTDIRPIVKLRSTAGTGYTYTTRKNRRNDPDRLILRKYDPILRRHVDFREER</sequence>
<gene>
    <name evidence="1" type="primary">rpmG2</name>
    <name type="ordered locus">BCG_2076c</name>
</gene>
<reference key="1">
    <citation type="journal article" date="2007" name="Proc. Natl. Acad. Sci. U.S.A.">
        <title>Genome plasticity of BCG and impact on vaccine efficacy.</title>
        <authorList>
            <person name="Brosch R."/>
            <person name="Gordon S.V."/>
            <person name="Garnier T."/>
            <person name="Eiglmeier K."/>
            <person name="Frigui W."/>
            <person name="Valenti P."/>
            <person name="Dos Santos S."/>
            <person name="Duthoy S."/>
            <person name="Lacroix C."/>
            <person name="Garcia-Pelayo C."/>
            <person name="Inwald J.K."/>
            <person name="Golby P."/>
            <person name="Garcia J.N."/>
            <person name="Hewinson R.G."/>
            <person name="Behr M.A."/>
            <person name="Quail M.A."/>
            <person name="Churcher C."/>
            <person name="Barrell B.G."/>
            <person name="Parkhill J."/>
            <person name="Cole S.T."/>
        </authorList>
    </citation>
    <scope>NUCLEOTIDE SEQUENCE [LARGE SCALE GENOMIC DNA]</scope>
    <source>
        <strain>BCG / Pasteur 1173P2</strain>
    </source>
</reference>
<dbReference type="EMBL" id="AM408590">
    <property type="protein sequence ID" value="CAL72064.1"/>
    <property type="molecule type" value="Genomic_DNA"/>
</dbReference>
<dbReference type="SMR" id="A1KKA3"/>
<dbReference type="KEGG" id="mbb:BCG_2076c"/>
<dbReference type="HOGENOM" id="CLU_190949_1_1_11"/>
<dbReference type="Proteomes" id="UP000001472">
    <property type="component" value="Chromosome"/>
</dbReference>
<dbReference type="GO" id="GO:0022625">
    <property type="term" value="C:cytosolic large ribosomal subunit"/>
    <property type="evidence" value="ECO:0007669"/>
    <property type="project" value="TreeGrafter"/>
</dbReference>
<dbReference type="GO" id="GO:0003735">
    <property type="term" value="F:structural constituent of ribosome"/>
    <property type="evidence" value="ECO:0007669"/>
    <property type="project" value="InterPro"/>
</dbReference>
<dbReference type="GO" id="GO:0006412">
    <property type="term" value="P:translation"/>
    <property type="evidence" value="ECO:0007669"/>
    <property type="project" value="UniProtKB-UniRule"/>
</dbReference>
<dbReference type="FunFam" id="2.20.28.120:FF:000002">
    <property type="entry name" value="50S ribosomal protein L33"/>
    <property type="match status" value="1"/>
</dbReference>
<dbReference type="Gene3D" id="2.20.28.120">
    <property type="entry name" value="Ribosomal protein L33"/>
    <property type="match status" value="1"/>
</dbReference>
<dbReference type="HAMAP" id="MF_00294">
    <property type="entry name" value="Ribosomal_bL33"/>
    <property type="match status" value="1"/>
</dbReference>
<dbReference type="InterPro" id="IPR001705">
    <property type="entry name" value="Ribosomal_bL33"/>
</dbReference>
<dbReference type="InterPro" id="IPR018264">
    <property type="entry name" value="Ribosomal_bL33_CS"/>
</dbReference>
<dbReference type="InterPro" id="IPR038584">
    <property type="entry name" value="Ribosomal_bL33_sf"/>
</dbReference>
<dbReference type="InterPro" id="IPR011332">
    <property type="entry name" value="Ribosomal_zn-bd"/>
</dbReference>
<dbReference type="NCBIfam" id="NF001860">
    <property type="entry name" value="PRK00595.1"/>
    <property type="match status" value="1"/>
</dbReference>
<dbReference type="NCBIfam" id="TIGR01023">
    <property type="entry name" value="rpmG_bact"/>
    <property type="match status" value="1"/>
</dbReference>
<dbReference type="PANTHER" id="PTHR15238">
    <property type="entry name" value="54S RIBOSOMAL PROTEIN L39, MITOCHONDRIAL"/>
    <property type="match status" value="1"/>
</dbReference>
<dbReference type="PANTHER" id="PTHR15238:SF1">
    <property type="entry name" value="LARGE RIBOSOMAL SUBUNIT PROTEIN BL33M"/>
    <property type="match status" value="1"/>
</dbReference>
<dbReference type="Pfam" id="PF00471">
    <property type="entry name" value="Ribosomal_L33"/>
    <property type="match status" value="1"/>
</dbReference>
<dbReference type="SUPFAM" id="SSF57829">
    <property type="entry name" value="Zn-binding ribosomal proteins"/>
    <property type="match status" value="1"/>
</dbReference>
<dbReference type="PROSITE" id="PS00582">
    <property type="entry name" value="RIBOSOMAL_L33"/>
    <property type="match status" value="1"/>
</dbReference>
<protein>
    <recommendedName>
        <fullName evidence="1">Large ribosomal subunit protein bL33B</fullName>
    </recommendedName>
    <alternativeName>
        <fullName evidence="1">50S ribosomal protein L33 2</fullName>
    </alternativeName>
</protein>
<organism>
    <name type="scientific">Mycobacterium bovis (strain BCG / Pasteur 1173P2)</name>
    <dbReference type="NCBI Taxonomy" id="410289"/>
    <lineage>
        <taxon>Bacteria</taxon>
        <taxon>Bacillati</taxon>
        <taxon>Actinomycetota</taxon>
        <taxon>Actinomycetes</taxon>
        <taxon>Mycobacteriales</taxon>
        <taxon>Mycobacteriaceae</taxon>
        <taxon>Mycobacterium</taxon>
        <taxon>Mycobacterium tuberculosis complex</taxon>
    </lineage>
</organism>
<name>RL332_MYCBP</name>
<keyword id="KW-0687">Ribonucleoprotein</keyword>
<keyword id="KW-0689">Ribosomal protein</keyword>
<proteinExistence type="inferred from homology"/>